<evidence type="ECO:0000255" key="1">
    <source>
        <dbReference type="HAMAP-Rule" id="MF_00167"/>
    </source>
</evidence>
<organism>
    <name type="scientific">Escherichia coli (strain 55989 / EAEC)</name>
    <dbReference type="NCBI Taxonomy" id="585055"/>
    <lineage>
        <taxon>Bacteria</taxon>
        <taxon>Pseudomonadati</taxon>
        <taxon>Pseudomonadota</taxon>
        <taxon>Gammaproteobacteria</taxon>
        <taxon>Enterobacterales</taxon>
        <taxon>Enterobacteriaceae</taxon>
        <taxon>Escherichia</taxon>
    </lineage>
</organism>
<protein>
    <recommendedName>
        <fullName evidence="1">Translational regulator CsrA</fullName>
    </recommendedName>
    <alternativeName>
        <fullName evidence="1">Carbon storage regulator</fullName>
    </alternativeName>
</protein>
<gene>
    <name evidence="1" type="primary">csrA</name>
    <name type="ordered locus">EC55989_2958</name>
</gene>
<dbReference type="EMBL" id="CU928145">
    <property type="protein sequence ID" value="CAU98844.1"/>
    <property type="molecule type" value="Genomic_DNA"/>
</dbReference>
<dbReference type="RefSeq" id="WP_000906486.1">
    <property type="nucleotide sequence ID" value="NZ_CP028304.1"/>
</dbReference>
<dbReference type="SMR" id="B7LEA7"/>
<dbReference type="GeneID" id="98389839"/>
<dbReference type="KEGG" id="eck:EC55989_2958"/>
<dbReference type="HOGENOM" id="CLU_164837_2_1_6"/>
<dbReference type="Proteomes" id="UP000000746">
    <property type="component" value="Chromosome"/>
</dbReference>
<dbReference type="GO" id="GO:0005829">
    <property type="term" value="C:cytosol"/>
    <property type="evidence" value="ECO:0007669"/>
    <property type="project" value="TreeGrafter"/>
</dbReference>
<dbReference type="GO" id="GO:0048027">
    <property type="term" value="F:mRNA 5'-UTR binding"/>
    <property type="evidence" value="ECO:0007669"/>
    <property type="project" value="UniProtKB-UniRule"/>
</dbReference>
<dbReference type="GO" id="GO:0006402">
    <property type="term" value="P:mRNA catabolic process"/>
    <property type="evidence" value="ECO:0007669"/>
    <property type="project" value="InterPro"/>
</dbReference>
<dbReference type="GO" id="GO:0045947">
    <property type="term" value="P:negative regulation of translational initiation"/>
    <property type="evidence" value="ECO:0007669"/>
    <property type="project" value="UniProtKB-UniRule"/>
</dbReference>
<dbReference type="GO" id="GO:0045948">
    <property type="term" value="P:positive regulation of translational initiation"/>
    <property type="evidence" value="ECO:0007669"/>
    <property type="project" value="UniProtKB-UniRule"/>
</dbReference>
<dbReference type="GO" id="GO:0006109">
    <property type="term" value="P:regulation of carbohydrate metabolic process"/>
    <property type="evidence" value="ECO:0007669"/>
    <property type="project" value="UniProtKB-UniRule"/>
</dbReference>
<dbReference type="FunFam" id="2.60.40.4380:FF:000001">
    <property type="entry name" value="Translational regulator CsrA"/>
    <property type="match status" value="1"/>
</dbReference>
<dbReference type="Gene3D" id="2.60.40.4380">
    <property type="entry name" value="Translational regulator CsrA"/>
    <property type="match status" value="1"/>
</dbReference>
<dbReference type="HAMAP" id="MF_00167">
    <property type="entry name" value="CsrA"/>
    <property type="match status" value="1"/>
</dbReference>
<dbReference type="InterPro" id="IPR003751">
    <property type="entry name" value="CsrA"/>
</dbReference>
<dbReference type="InterPro" id="IPR036107">
    <property type="entry name" value="CsrA_sf"/>
</dbReference>
<dbReference type="NCBIfam" id="TIGR00202">
    <property type="entry name" value="csrA"/>
    <property type="match status" value="1"/>
</dbReference>
<dbReference type="NCBIfam" id="NF002469">
    <property type="entry name" value="PRK01712.1"/>
    <property type="match status" value="1"/>
</dbReference>
<dbReference type="PANTHER" id="PTHR34984">
    <property type="entry name" value="CARBON STORAGE REGULATOR"/>
    <property type="match status" value="1"/>
</dbReference>
<dbReference type="PANTHER" id="PTHR34984:SF1">
    <property type="entry name" value="CARBON STORAGE REGULATOR"/>
    <property type="match status" value="1"/>
</dbReference>
<dbReference type="Pfam" id="PF02599">
    <property type="entry name" value="CsrA"/>
    <property type="match status" value="1"/>
</dbReference>
<dbReference type="SUPFAM" id="SSF117130">
    <property type="entry name" value="CsrA-like"/>
    <property type="match status" value="1"/>
</dbReference>
<reference key="1">
    <citation type="journal article" date="2009" name="PLoS Genet.">
        <title>Organised genome dynamics in the Escherichia coli species results in highly diverse adaptive paths.</title>
        <authorList>
            <person name="Touchon M."/>
            <person name="Hoede C."/>
            <person name="Tenaillon O."/>
            <person name="Barbe V."/>
            <person name="Baeriswyl S."/>
            <person name="Bidet P."/>
            <person name="Bingen E."/>
            <person name="Bonacorsi S."/>
            <person name="Bouchier C."/>
            <person name="Bouvet O."/>
            <person name="Calteau A."/>
            <person name="Chiapello H."/>
            <person name="Clermont O."/>
            <person name="Cruveiller S."/>
            <person name="Danchin A."/>
            <person name="Diard M."/>
            <person name="Dossat C."/>
            <person name="Karoui M.E."/>
            <person name="Frapy E."/>
            <person name="Garry L."/>
            <person name="Ghigo J.M."/>
            <person name="Gilles A.M."/>
            <person name="Johnson J."/>
            <person name="Le Bouguenec C."/>
            <person name="Lescat M."/>
            <person name="Mangenot S."/>
            <person name="Martinez-Jehanne V."/>
            <person name="Matic I."/>
            <person name="Nassif X."/>
            <person name="Oztas S."/>
            <person name="Petit M.A."/>
            <person name="Pichon C."/>
            <person name="Rouy Z."/>
            <person name="Ruf C.S."/>
            <person name="Schneider D."/>
            <person name="Tourret J."/>
            <person name="Vacherie B."/>
            <person name="Vallenet D."/>
            <person name="Medigue C."/>
            <person name="Rocha E.P.C."/>
            <person name="Denamur E."/>
        </authorList>
    </citation>
    <scope>NUCLEOTIDE SEQUENCE [LARGE SCALE GENOMIC DNA]</scope>
    <source>
        <strain>55989 / EAEC</strain>
    </source>
</reference>
<accession>B7LEA7</accession>
<comment type="function">
    <text evidence="1">A key translational regulator that binds mRNA to regulate translation initiation and/or mRNA stability. Mediates global changes in gene expression, shifting from rapid growth to stress survival by linking envelope stress, the stringent response and the catabolite repression systems. Usually binds in the 5'-UTR; binding at or near the Shine-Dalgarno sequence prevents ribosome-binding, repressing translation, binding elsewhere in the 5'-UTR can activate translation and/or stabilize the mRNA. Its function is antagonized by small RNA(s).</text>
</comment>
<comment type="subunit">
    <text evidence="1">Homodimer; the beta-strands of each monomer intercalate to form a hydrophobic core, while the alpha-helices form wings that extend away from the core.</text>
</comment>
<comment type="subcellular location">
    <subcellularLocation>
        <location evidence="1">Cytoplasm</location>
    </subcellularLocation>
</comment>
<comment type="similarity">
    <text evidence="1">Belongs to the CsrA/RsmA family.</text>
</comment>
<feature type="chain" id="PRO_1000123626" description="Translational regulator CsrA">
    <location>
        <begin position="1"/>
        <end position="61"/>
    </location>
</feature>
<name>CSRA_ECO55</name>
<keyword id="KW-0010">Activator</keyword>
<keyword id="KW-0963">Cytoplasm</keyword>
<keyword id="KW-1185">Reference proteome</keyword>
<keyword id="KW-0678">Repressor</keyword>
<keyword id="KW-0694">RNA-binding</keyword>
<keyword id="KW-0810">Translation regulation</keyword>
<sequence length="61" mass="6856">MLILTRRVGETLMIGDEVTVTVLGVKGNQVRIGVNAPKEVSVHREEIYQRIQAEKSQQSSY</sequence>
<proteinExistence type="inferred from homology"/>